<organism>
    <name type="scientific">Conus magus</name>
    <name type="common">Magical cone</name>
    <dbReference type="NCBI Taxonomy" id="6492"/>
    <lineage>
        <taxon>Eukaryota</taxon>
        <taxon>Metazoa</taxon>
        <taxon>Spiralia</taxon>
        <taxon>Lophotrochozoa</taxon>
        <taxon>Mollusca</taxon>
        <taxon>Gastropoda</taxon>
        <taxon>Caenogastropoda</taxon>
        <taxon>Neogastropoda</taxon>
        <taxon>Conoidea</taxon>
        <taxon>Conidae</taxon>
        <taxon>Conus</taxon>
        <taxon>Pionoconus</taxon>
    </lineage>
</organism>
<name>O16B_CONMA</name>
<accession>P69754</accession>
<evidence type="ECO:0000250" key="1"/>
<evidence type="ECO:0000255" key="2"/>
<evidence type="ECO:0000305" key="3"/>
<comment type="function">
    <text evidence="1">Delta-conotoxins bind to site 6 of voltage-gated sodium channels (Nav) and inhibit the inactivation process.</text>
</comment>
<comment type="subcellular location">
    <subcellularLocation>
        <location evidence="1">Secreted</location>
    </subcellularLocation>
</comment>
<comment type="tissue specificity">
    <text>Expressed by the venom duct.</text>
</comment>
<comment type="domain">
    <text evidence="1">The presence of a 'disulfide through disulfide knot' structurally defines this protein as a knottin.</text>
</comment>
<comment type="domain">
    <text>The cysteine framework is VI/VII (C-C-CC-C-C).</text>
</comment>
<comment type="similarity">
    <text evidence="3">Belongs to the conotoxin O1 superfamily.</text>
</comment>
<proteinExistence type="evidence at transcript level"/>
<sequence>MKLTCVMIVAVLFLTAWTFVTADDSRYGLKDLFPKERHEMKNPEASKLNQREACYNAGSFCGIHPGLCCSEFCILWCITFVDSG</sequence>
<keyword id="KW-0027">Amidation</keyword>
<keyword id="KW-1015">Disulfide bond</keyword>
<keyword id="KW-0379">Hydroxylation</keyword>
<keyword id="KW-0872">Ion channel impairing toxin</keyword>
<keyword id="KW-0960">Knottin</keyword>
<keyword id="KW-0528">Neurotoxin</keyword>
<keyword id="KW-0638">Presynaptic neurotoxin</keyword>
<keyword id="KW-0964">Secreted</keyword>
<keyword id="KW-0732">Signal</keyword>
<keyword id="KW-0800">Toxin</keyword>
<keyword id="KW-0738">Voltage-gated sodium channel impairing toxin</keyword>
<dbReference type="EMBL" id="DJ379436">
    <property type="status" value="NOT_ANNOTATED_CDS"/>
    <property type="molecule type" value="Unassigned_DNA"/>
</dbReference>
<dbReference type="SMR" id="P69754"/>
<dbReference type="ConoServer" id="1623">
    <property type="toxin name" value="MVIB"/>
</dbReference>
<dbReference type="GO" id="GO:0005576">
    <property type="term" value="C:extracellular region"/>
    <property type="evidence" value="ECO:0007669"/>
    <property type="project" value="UniProtKB-SubCell"/>
</dbReference>
<dbReference type="GO" id="GO:0044231">
    <property type="term" value="C:host cell presynaptic membrane"/>
    <property type="evidence" value="ECO:0007669"/>
    <property type="project" value="UniProtKB-KW"/>
</dbReference>
<dbReference type="GO" id="GO:0019871">
    <property type="term" value="F:sodium channel inhibitor activity"/>
    <property type="evidence" value="ECO:0007669"/>
    <property type="project" value="InterPro"/>
</dbReference>
<dbReference type="GO" id="GO:0090729">
    <property type="term" value="F:toxin activity"/>
    <property type="evidence" value="ECO:0007669"/>
    <property type="project" value="UniProtKB-KW"/>
</dbReference>
<dbReference type="InterPro" id="IPR004214">
    <property type="entry name" value="Conotoxin"/>
</dbReference>
<dbReference type="InterPro" id="IPR012322">
    <property type="entry name" value="Conotoxin_d-typ_CS"/>
</dbReference>
<dbReference type="InterPro" id="IPR012321">
    <property type="entry name" value="Conotoxin_omega-typ_CS"/>
</dbReference>
<dbReference type="Pfam" id="PF02950">
    <property type="entry name" value="Conotoxin"/>
    <property type="match status" value="1"/>
</dbReference>
<dbReference type="PROSITE" id="PS60005">
    <property type="entry name" value="DELTA_CONOTOXIN"/>
    <property type="match status" value="1"/>
</dbReference>
<reference key="1">
    <citation type="patent" date="2003-11-11" number="JP2003533178">
        <title>O-superfamily conotoxin peptides.</title>
        <authorList>
            <person name="Hillyard D.R."/>
            <person name="Mcintosh M.J."/>
            <person name="Jones R.M."/>
            <person name="Cartier E.G."/>
            <person name="Watkins M."/>
            <person name="Olivera B.M."/>
            <person name="Layer R.T."/>
        </authorList>
    </citation>
    <scope>NUCLEOTIDE SEQUENCE</scope>
</reference>
<reference key="2">
    <citation type="journal article" date="2001" name="Biochemistry">
        <title>Delta-conotoxin structure/function through a cladistic analysis.</title>
        <authorList>
            <person name="Bulaj G."/>
            <person name="DeLaCruz R."/>
            <person name="Azimi-Zonooz A."/>
            <person name="West P."/>
            <person name="Watkins M."/>
            <person name="Yoshikami D."/>
            <person name="Olivera B.M."/>
        </authorList>
    </citation>
    <scope>NUCLEOTIDE SEQUENCE [MRNA]</scope>
    <source>
        <tissue>Venom duct</tissue>
    </source>
</reference>
<feature type="signal peptide" evidence="2">
    <location>
        <begin position="1"/>
        <end position="22"/>
    </location>
</feature>
<feature type="propeptide" id="PRO_0000392701" evidence="1">
    <location>
        <begin position="23"/>
        <end position="51"/>
    </location>
</feature>
<feature type="peptide" id="PRO_0000044870" description="Delta-conotoxin-like MVIB">
    <location>
        <begin position="52"/>
        <end position="83"/>
    </location>
</feature>
<feature type="modified residue" description="4-hydroxyproline" evidence="1">
    <location>
        <position position="65"/>
    </location>
</feature>
<feature type="modified residue" description="Serine amide" evidence="1">
    <location>
        <position position="83"/>
    </location>
</feature>
<feature type="disulfide bond" evidence="1">
    <location>
        <begin position="54"/>
        <end position="69"/>
    </location>
</feature>
<feature type="disulfide bond" evidence="1">
    <location>
        <begin position="61"/>
        <end position="73"/>
    </location>
</feature>
<feature type="disulfide bond" evidence="1">
    <location>
        <begin position="68"/>
        <end position="77"/>
    </location>
</feature>
<protein>
    <recommendedName>
        <fullName>Delta-conotoxin-like MVIB</fullName>
        <shortName>Delta-MVIB</shortName>
    </recommendedName>
</protein>